<gene>
    <name evidence="1" type="primary">leuD</name>
    <name type="ordered locus">BPUM_2466</name>
</gene>
<evidence type="ECO:0000255" key="1">
    <source>
        <dbReference type="HAMAP-Rule" id="MF_01031"/>
    </source>
</evidence>
<organism>
    <name type="scientific">Bacillus pumilus (strain SAFR-032)</name>
    <dbReference type="NCBI Taxonomy" id="315750"/>
    <lineage>
        <taxon>Bacteria</taxon>
        <taxon>Bacillati</taxon>
        <taxon>Bacillota</taxon>
        <taxon>Bacilli</taxon>
        <taxon>Bacillales</taxon>
        <taxon>Bacillaceae</taxon>
        <taxon>Bacillus</taxon>
    </lineage>
</organism>
<name>LEUD_BACP2</name>
<feature type="chain" id="PRO_1000063734" description="3-isopropylmalate dehydratase small subunit">
    <location>
        <begin position="1"/>
        <end position="199"/>
    </location>
</feature>
<reference key="1">
    <citation type="journal article" date="2007" name="PLoS ONE">
        <title>Paradoxical DNA repair and peroxide resistance gene conservation in Bacillus pumilus SAFR-032.</title>
        <authorList>
            <person name="Gioia J."/>
            <person name="Yerrapragada S."/>
            <person name="Qin X."/>
            <person name="Jiang H."/>
            <person name="Igboeli O.C."/>
            <person name="Muzny D."/>
            <person name="Dugan-Rocha S."/>
            <person name="Ding Y."/>
            <person name="Hawes A."/>
            <person name="Liu W."/>
            <person name="Perez L."/>
            <person name="Kovar C."/>
            <person name="Dinh H."/>
            <person name="Lee S."/>
            <person name="Nazareth L."/>
            <person name="Blyth P."/>
            <person name="Holder M."/>
            <person name="Buhay C."/>
            <person name="Tirumalai M.R."/>
            <person name="Liu Y."/>
            <person name="Dasgupta I."/>
            <person name="Bokhetache L."/>
            <person name="Fujita M."/>
            <person name="Karouia F."/>
            <person name="Eswara Moorthy P."/>
            <person name="Siefert J."/>
            <person name="Uzman A."/>
            <person name="Buzumbo P."/>
            <person name="Verma A."/>
            <person name="Zwiya H."/>
            <person name="McWilliams B.D."/>
            <person name="Olowu A."/>
            <person name="Clinkenbeard K.D."/>
            <person name="Newcombe D."/>
            <person name="Golebiewski L."/>
            <person name="Petrosino J.F."/>
            <person name="Nicholson W.L."/>
            <person name="Fox G.E."/>
            <person name="Venkateswaran K."/>
            <person name="Highlander S.K."/>
            <person name="Weinstock G.M."/>
        </authorList>
    </citation>
    <scope>NUCLEOTIDE SEQUENCE [LARGE SCALE GENOMIC DNA]</scope>
    <source>
        <strain>SAFR-032</strain>
    </source>
</reference>
<comment type="function">
    <text evidence="1">Catalyzes the isomerization between 2-isopropylmalate and 3-isopropylmalate, via the formation of 2-isopropylmaleate.</text>
</comment>
<comment type="catalytic activity">
    <reaction evidence="1">
        <text>(2R,3S)-3-isopropylmalate = (2S)-2-isopropylmalate</text>
        <dbReference type="Rhea" id="RHEA:32287"/>
        <dbReference type="ChEBI" id="CHEBI:1178"/>
        <dbReference type="ChEBI" id="CHEBI:35121"/>
        <dbReference type="EC" id="4.2.1.33"/>
    </reaction>
</comment>
<comment type="pathway">
    <text evidence="1">Amino-acid biosynthesis; L-leucine biosynthesis; L-leucine from 3-methyl-2-oxobutanoate: step 2/4.</text>
</comment>
<comment type="subunit">
    <text evidence="1">Heterodimer of LeuC and LeuD.</text>
</comment>
<comment type="similarity">
    <text evidence="1">Belongs to the LeuD family. LeuD type 1 subfamily.</text>
</comment>
<proteinExistence type="inferred from homology"/>
<protein>
    <recommendedName>
        <fullName evidence="1">3-isopropylmalate dehydratase small subunit</fullName>
        <ecNumber evidence="1">4.2.1.33</ecNumber>
    </recommendedName>
    <alternativeName>
        <fullName evidence="1">Alpha-IPM isomerase</fullName>
        <shortName evidence="1">IPMI</shortName>
    </alternativeName>
    <alternativeName>
        <fullName evidence="1">Isopropylmalate isomerase</fullName>
    </alternativeName>
</protein>
<keyword id="KW-0028">Amino-acid biosynthesis</keyword>
<keyword id="KW-0100">Branched-chain amino acid biosynthesis</keyword>
<keyword id="KW-0432">Leucine biosynthesis</keyword>
<keyword id="KW-0456">Lyase</keyword>
<sequence length="199" mass="23005">MEPLVTHKGKAAVLNRINVDTDQIIPKQFLKRIERTGYGRFAFFDWRYLADGSPNPDFELNQPIYEGSSILIAGENFGCGSSREHAPWALDDYGFKIVIAPSFADIFHQNCFKNGMLPIRLDYDVWKTFAASYENKGYEMTVDLEKQQIEDHEGNITPFDVDPHWREMLLNGYDEISLTLLLEDDIQAFEDKRSSWLRA</sequence>
<dbReference type="EC" id="4.2.1.33" evidence="1"/>
<dbReference type="EMBL" id="CP000813">
    <property type="protein sequence ID" value="ABV63129.1"/>
    <property type="molecule type" value="Genomic_DNA"/>
</dbReference>
<dbReference type="RefSeq" id="WP_003216415.1">
    <property type="nucleotide sequence ID" value="NZ_VEIS01000010.1"/>
</dbReference>
<dbReference type="SMR" id="A8FFW2"/>
<dbReference type="STRING" id="315750.BPUM_2466"/>
<dbReference type="GeneID" id="5621730"/>
<dbReference type="KEGG" id="bpu:BPUM_2466"/>
<dbReference type="eggNOG" id="COG0066">
    <property type="taxonomic scope" value="Bacteria"/>
</dbReference>
<dbReference type="HOGENOM" id="CLU_081378_0_3_9"/>
<dbReference type="OrthoDB" id="9777465at2"/>
<dbReference type="UniPathway" id="UPA00048">
    <property type="reaction ID" value="UER00071"/>
</dbReference>
<dbReference type="Proteomes" id="UP000001355">
    <property type="component" value="Chromosome"/>
</dbReference>
<dbReference type="GO" id="GO:0009316">
    <property type="term" value="C:3-isopropylmalate dehydratase complex"/>
    <property type="evidence" value="ECO:0007669"/>
    <property type="project" value="InterPro"/>
</dbReference>
<dbReference type="GO" id="GO:0003861">
    <property type="term" value="F:3-isopropylmalate dehydratase activity"/>
    <property type="evidence" value="ECO:0007669"/>
    <property type="project" value="UniProtKB-UniRule"/>
</dbReference>
<dbReference type="GO" id="GO:0009098">
    <property type="term" value="P:L-leucine biosynthetic process"/>
    <property type="evidence" value="ECO:0007669"/>
    <property type="project" value="UniProtKB-UniRule"/>
</dbReference>
<dbReference type="CDD" id="cd01577">
    <property type="entry name" value="IPMI_Swivel"/>
    <property type="match status" value="1"/>
</dbReference>
<dbReference type="FunFam" id="3.20.19.10:FF:000003">
    <property type="entry name" value="3-isopropylmalate dehydratase small subunit"/>
    <property type="match status" value="1"/>
</dbReference>
<dbReference type="Gene3D" id="3.20.19.10">
    <property type="entry name" value="Aconitase, domain 4"/>
    <property type="match status" value="1"/>
</dbReference>
<dbReference type="HAMAP" id="MF_01031">
    <property type="entry name" value="LeuD_type1"/>
    <property type="match status" value="1"/>
</dbReference>
<dbReference type="InterPro" id="IPR004431">
    <property type="entry name" value="3-IsopropMal_deHydase_ssu"/>
</dbReference>
<dbReference type="InterPro" id="IPR015928">
    <property type="entry name" value="Aconitase/3IPM_dehydase_swvl"/>
</dbReference>
<dbReference type="InterPro" id="IPR000573">
    <property type="entry name" value="AconitaseA/IPMdHydase_ssu_swvl"/>
</dbReference>
<dbReference type="InterPro" id="IPR033940">
    <property type="entry name" value="IPMI_Swivel"/>
</dbReference>
<dbReference type="InterPro" id="IPR050075">
    <property type="entry name" value="LeuD"/>
</dbReference>
<dbReference type="NCBIfam" id="TIGR00171">
    <property type="entry name" value="leuD"/>
    <property type="match status" value="1"/>
</dbReference>
<dbReference type="NCBIfam" id="NF002458">
    <property type="entry name" value="PRK01641.1"/>
    <property type="match status" value="1"/>
</dbReference>
<dbReference type="PANTHER" id="PTHR43345:SF5">
    <property type="entry name" value="3-ISOPROPYLMALATE DEHYDRATASE SMALL SUBUNIT"/>
    <property type="match status" value="1"/>
</dbReference>
<dbReference type="PANTHER" id="PTHR43345">
    <property type="entry name" value="3-ISOPROPYLMALATE DEHYDRATASE SMALL SUBUNIT 2-RELATED-RELATED"/>
    <property type="match status" value="1"/>
</dbReference>
<dbReference type="Pfam" id="PF00694">
    <property type="entry name" value="Aconitase_C"/>
    <property type="match status" value="1"/>
</dbReference>
<dbReference type="SUPFAM" id="SSF52016">
    <property type="entry name" value="LeuD/IlvD-like"/>
    <property type="match status" value="1"/>
</dbReference>
<accession>A8FFW2</accession>